<proteinExistence type="inferred from homology"/>
<gene>
    <name type="primary">MSLNL</name>
    <name type="synonym">C16orf37</name>
    <name type="synonym">MPFL</name>
</gene>
<evidence type="ECO:0000250" key="1"/>
<evidence type="ECO:0000255" key="2"/>
<evidence type="ECO:0000256" key="3">
    <source>
        <dbReference type="SAM" id="MobiDB-lite"/>
    </source>
</evidence>
<evidence type="ECO:0000305" key="4"/>
<keyword id="KW-0130">Cell adhesion</keyword>
<keyword id="KW-0325">Glycoprotein</keyword>
<keyword id="KW-0472">Membrane</keyword>
<keyword id="KW-1185">Reference proteome</keyword>
<keyword id="KW-0732">Signal</keyword>
<keyword id="KW-0812">Transmembrane</keyword>
<keyword id="KW-1133">Transmembrane helix</keyword>
<organism>
    <name type="scientific">Homo sapiens</name>
    <name type="common">Human</name>
    <dbReference type="NCBI Taxonomy" id="9606"/>
    <lineage>
        <taxon>Eukaryota</taxon>
        <taxon>Metazoa</taxon>
        <taxon>Chordata</taxon>
        <taxon>Craniata</taxon>
        <taxon>Vertebrata</taxon>
        <taxon>Euteleostomi</taxon>
        <taxon>Mammalia</taxon>
        <taxon>Eutheria</taxon>
        <taxon>Euarchontoglires</taxon>
        <taxon>Primates</taxon>
        <taxon>Haplorrhini</taxon>
        <taxon>Catarrhini</taxon>
        <taxon>Hominidae</taxon>
        <taxon>Homo</taxon>
    </lineage>
</organism>
<accession>Q96KJ4</accession>
<reference key="1">
    <citation type="journal article" date="2004" name="Nature">
        <title>The sequence and analysis of duplication-rich human chromosome 16.</title>
        <authorList>
            <person name="Martin J."/>
            <person name="Han C."/>
            <person name="Gordon L.A."/>
            <person name="Terry A."/>
            <person name="Prabhakar S."/>
            <person name="She X."/>
            <person name="Xie G."/>
            <person name="Hellsten U."/>
            <person name="Chan Y.M."/>
            <person name="Altherr M."/>
            <person name="Couronne O."/>
            <person name="Aerts A."/>
            <person name="Bajorek E."/>
            <person name="Black S."/>
            <person name="Blumer H."/>
            <person name="Branscomb E."/>
            <person name="Brown N.C."/>
            <person name="Bruno W.J."/>
            <person name="Buckingham J.M."/>
            <person name="Callen D.F."/>
            <person name="Campbell C.S."/>
            <person name="Campbell M.L."/>
            <person name="Campbell E.W."/>
            <person name="Caoile C."/>
            <person name="Challacombe J.F."/>
            <person name="Chasteen L.A."/>
            <person name="Chertkov O."/>
            <person name="Chi H.C."/>
            <person name="Christensen M."/>
            <person name="Clark L.M."/>
            <person name="Cohn J.D."/>
            <person name="Denys M."/>
            <person name="Detter J.C."/>
            <person name="Dickson M."/>
            <person name="Dimitrijevic-Bussod M."/>
            <person name="Escobar J."/>
            <person name="Fawcett J.J."/>
            <person name="Flowers D."/>
            <person name="Fotopulos D."/>
            <person name="Glavina T."/>
            <person name="Gomez M."/>
            <person name="Gonzales E."/>
            <person name="Goodstein D."/>
            <person name="Goodwin L.A."/>
            <person name="Grady D.L."/>
            <person name="Grigoriev I."/>
            <person name="Groza M."/>
            <person name="Hammon N."/>
            <person name="Hawkins T."/>
            <person name="Haydu L."/>
            <person name="Hildebrand C.E."/>
            <person name="Huang W."/>
            <person name="Israni S."/>
            <person name="Jett J."/>
            <person name="Jewett P.B."/>
            <person name="Kadner K."/>
            <person name="Kimball H."/>
            <person name="Kobayashi A."/>
            <person name="Krawczyk M.-C."/>
            <person name="Leyba T."/>
            <person name="Longmire J.L."/>
            <person name="Lopez F."/>
            <person name="Lou Y."/>
            <person name="Lowry S."/>
            <person name="Ludeman T."/>
            <person name="Manohar C.F."/>
            <person name="Mark G.A."/>
            <person name="McMurray K.L."/>
            <person name="Meincke L.J."/>
            <person name="Morgan J."/>
            <person name="Moyzis R.K."/>
            <person name="Mundt M.O."/>
            <person name="Munk A.C."/>
            <person name="Nandkeshwar R.D."/>
            <person name="Pitluck S."/>
            <person name="Pollard M."/>
            <person name="Predki P."/>
            <person name="Parson-Quintana B."/>
            <person name="Ramirez L."/>
            <person name="Rash S."/>
            <person name="Retterer J."/>
            <person name="Ricke D.O."/>
            <person name="Robinson D.L."/>
            <person name="Rodriguez A."/>
            <person name="Salamov A."/>
            <person name="Saunders E.H."/>
            <person name="Scott D."/>
            <person name="Shough T."/>
            <person name="Stallings R.L."/>
            <person name="Stalvey M."/>
            <person name="Sutherland R.D."/>
            <person name="Tapia R."/>
            <person name="Tesmer J.G."/>
            <person name="Thayer N."/>
            <person name="Thompson L.S."/>
            <person name="Tice H."/>
            <person name="Torney D.C."/>
            <person name="Tran-Gyamfi M."/>
            <person name="Tsai M."/>
            <person name="Ulanovsky L.E."/>
            <person name="Ustaszewska A."/>
            <person name="Vo N."/>
            <person name="White P.S."/>
            <person name="Williams A.L."/>
            <person name="Wills P.L."/>
            <person name="Wu J.-R."/>
            <person name="Wu K."/>
            <person name="Yang J."/>
            <person name="DeJong P."/>
            <person name="Bruce D."/>
            <person name="Doggett N.A."/>
            <person name="Deaven L."/>
            <person name="Schmutz J."/>
            <person name="Grimwood J."/>
            <person name="Richardson P."/>
            <person name="Rokhsar D.S."/>
            <person name="Eichler E.E."/>
            <person name="Gilna P."/>
            <person name="Lucas S.M."/>
            <person name="Myers R.M."/>
            <person name="Rubin E.M."/>
            <person name="Pennacchio L.A."/>
        </authorList>
    </citation>
    <scope>NUCLEOTIDE SEQUENCE [LARGE SCALE GENOMIC DNA]</scope>
</reference>
<reference key="2">
    <citation type="journal article" date="2001" name="Hum. Mol. Genet.">
        <title>Sequence, structure and pathology of the fully annotated terminal 2 Mb of the short arm of human chromosome 16.</title>
        <authorList>
            <person name="Daniels R.J."/>
            <person name="Peden J.F."/>
            <person name="Lloyd C."/>
            <person name="Horsley S.W."/>
            <person name="Clark K."/>
            <person name="Tufarelli C."/>
            <person name="Kearney L."/>
            <person name="Buckle V.J."/>
            <person name="Doggett N.A."/>
            <person name="Flint J."/>
            <person name="Higgs D.R."/>
        </authorList>
    </citation>
    <scope>NUCLEOTIDE SEQUENCE [LARGE SCALE GENOMIC DNA]</scope>
</reference>
<reference key="3">
    <citation type="submission" date="2005-09" db="EMBL/GenBank/DDBJ databases">
        <authorList>
            <person name="Mural R.J."/>
            <person name="Istrail S."/>
            <person name="Sutton G.G."/>
            <person name="Florea L."/>
            <person name="Halpern A.L."/>
            <person name="Mobarry C.M."/>
            <person name="Lippert R."/>
            <person name="Walenz B."/>
            <person name="Shatkay H."/>
            <person name="Dew I."/>
            <person name="Miller J.R."/>
            <person name="Flanigan M.J."/>
            <person name="Edwards N.J."/>
            <person name="Bolanos R."/>
            <person name="Fasulo D."/>
            <person name="Halldorsson B.V."/>
            <person name="Hannenhalli S."/>
            <person name="Turner R."/>
            <person name="Yooseph S."/>
            <person name="Lu F."/>
            <person name="Nusskern D.R."/>
            <person name="Shue B.C."/>
            <person name="Zheng X.H."/>
            <person name="Zhong F."/>
            <person name="Delcher A.L."/>
            <person name="Huson D.H."/>
            <person name="Kravitz S.A."/>
            <person name="Mouchard L."/>
            <person name="Reinert K."/>
            <person name="Remington K.A."/>
            <person name="Clark A.G."/>
            <person name="Waterman M.S."/>
            <person name="Eichler E.E."/>
            <person name="Adams M.D."/>
            <person name="Hunkapiller M.W."/>
            <person name="Myers E.W."/>
            <person name="Venter J.C."/>
        </authorList>
    </citation>
    <scope>NUCLEOTIDE SEQUENCE [LARGE SCALE GENOMIC DNA]</scope>
</reference>
<protein>
    <recommendedName>
        <fullName>Mesothelin-like protein</fullName>
    </recommendedName>
    <alternativeName>
        <fullName>Pre-pro-megakaryocyte-potentiating-factor-like</fullName>
    </alternativeName>
</protein>
<sequence length="702" mass="74540">MAAAVTIPGPRIGALQSSGLTLLLSLAAHCSGPQAKVLSPGGLDASGANLWASANCSLLQGFWCQPASQLPRDQLSALIQRLALLQVPLQAWQLSCLANLASRCGLQDDFTLHPPNLLLFYNLSQVREADCRAFIRRAAQGDVELLSHLPDQRVALWRAAVACLVGAGLRLSASDQQLLGALVCDMDASSIGAADPHMLENLRRCPRLTAAQRIALNSLLAGGKTSLGPPGSWTLEGLQALGPLATYISPHLWAQVQEAVGLGFFRSVVASCQVGRLGQREARCFVTSFLESKTKPVSSRPRLSTGNITAATLRDDLFLVHYDCAELESCLDGCILRTNLDTLLQHLLPTECQHVVKAKLAQIYPQGLPEDQLRLITSLVYLYSRTEIGQWSITSQDTVMALLASDVALENQTEAVLQKFLEHNGTVSGALLLAIGGTRLCWMSPHQIQTIHPQELRLAGALDLSSCPQSRKDVLYTKAHETFGSSGTLAAYYRLMRPYLGGSPGGAQPPSPVPPGGAPVEELRHLAHANISMDIDTFTSLNPLELQSLDVGNVTALLGHNVGDLQKARSHPTVRAWLRSLNSSTLGQLGLDASPTSPTGPAHGTRGPPSTTHQVLHLVHTSGLPTNDAQASTSGSLWAPLGYLPLAMALPCSLLCLLHWGTCILVSVDSVASGWLGSQGSGAGKTEVLDSAGRPLGLTGQL</sequence>
<feature type="signal peptide" evidence="2">
    <location>
        <begin position="1"/>
        <end position="35"/>
    </location>
</feature>
<feature type="chain" id="PRO_0000320648" description="Mesothelin-like protein">
    <location>
        <begin position="36"/>
        <end position="702"/>
    </location>
</feature>
<feature type="topological domain" description="Extracellular" evidence="2">
    <location>
        <begin position="36"/>
        <end position="638"/>
    </location>
</feature>
<feature type="transmembrane region" description="Helical" evidence="2">
    <location>
        <begin position="639"/>
        <end position="668"/>
    </location>
</feature>
<feature type="topological domain" description="Cytoplasmic" evidence="2">
    <location>
        <begin position="669"/>
        <end position="702"/>
    </location>
</feature>
<feature type="region of interest" description="Disordered" evidence="3">
    <location>
        <begin position="588"/>
        <end position="611"/>
    </location>
</feature>
<feature type="glycosylation site" description="N-linked (GlcNAc...) asparagine" evidence="2">
    <location>
        <position position="122"/>
    </location>
</feature>
<feature type="glycosylation site" description="N-linked (GlcNAc...) asparagine" evidence="2">
    <location>
        <position position="307"/>
    </location>
</feature>
<feature type="glycosylation site" description="N-linked (GlcNAc...) asparagine" evidence="2">
    <location>
        <position position="424"/>
    </location>
</feature>
<feature type="sequence variant" id="VAR_039257" description="In dbSNP:rs12599363.">
    <original>D</original>
    <variation>V</variation>
    <location>
        <position position="463"/>
    </location>
</feature>
<feature type="sequence variant" id="VAR_039258" description="In dbSNP:rs9746539.">
    <original>S</original>
    <variation>G</variation>
    <location>
        <position position="597"/>
    </location>
</feature>
<feature type="sequence conflict" description="In Ref. 2; AAK61254 and 3; EAW85717." evidence="4" ref="2 3">
    <original>G</original>
    <variation>R</variation>
    <location>
        <position position="168"/>
    </location>
</feature>
<dbReference type="EMBL" id="AL031258">
    <property type="status" value="NOT_ANNOTATED_CDS"/>
    <property type="molecule type" value="Genomic_DNA"/>
</dbReference>
<dbReference type="EMBL" id="AE006464">
    <property type="protein sequence ID" value="AAK61254.1"/>
    <property type="status" value="ALT_SEQ"/>
    <property type="molecule type" value="Genomic_DNA"/>
</dbReference>
<dbReference type="EMBL" id="CH471112">
    <property type="protein sequence ID" value="EAW85717.1"/>
    <property type="status" value="ALT_SEQ"/>
    <property type="molecule type" value="Genomic_DNA"/>
</dbReference>
<dbReference type="SMR" id="Q96KJ4"/>
<dbReference type="FunCoup" id="Q96KJ4">
    <property type="interactions" value="16"/>
</dbReference>
<dbReference type="STRING" id="9606.ENSP00000441381"/>
<dbReference type="GlyCosmos" id="Q96KJ4">
    <property type="glycosylation" value="3 sites, No reported glycans"/>
</dbReference>
<dbReference type="GlyGen" id="Q96KJ4">
    <property type="glycosylation" value="3 sites"/>
</dbReference>
<dbReference type="iPTMnet" id="Q96KJ4"/>
<dbReference type="PhosphoSitePlus" id="Q96KJ4"/>
<dbReference type="BioMuta" id="MSLNL"/>
<dbReference type="DMDM" id="313104212"/>
<dbReference type="MassIVE" id="Q96KJ4"/>
<dbReference type="PaxDb" id="9606-ENSP00000441381"/>
<dbReference type="PeptideAtlas" id="Q96KJ4"/>
<dbReference type="ProteomicsDB" id="77078"/>
<dbReference type="Antibodypedia" id="82376">
    <property type="antibodies" value="1 antibodies from 1 providers"/>
</dbReference>
<dbReference type="UCSC" id="uc059osa.1">
    <property type="organism name" value="human"/>
</dbReference>
<dbReference type="AGR" id="HGNC:14170"/>
<dbReference type="GeneCards" id="MSLNL"/>
<dbReference type="HGNC" id="HGNC:14170">
    <property type="gene designation" value="MSLNL"/>
</dbReference>
<dbReference type="HPA" id="ENSG00000162006">
    <property type="expression patterns" value="Not detected"/>
</dbReference>
<dbReference type="neXtProt" id="NX_Q96KJ4"/>
<dbReference type="PharmGKB" id="PA162396252"/>
<dbReference type="VEuPathDB" id="HostDB:ENSG00000162006"/>
<dbReference type="eggNOG" id="ENOG502QRX1">
    <property type="taxonomic scope" value="Eukaryota"/>
</dbReference>
<dbReference type="HOGENOM" id="CLU_014552_2_0_1"/>
<dbReference type="InParanoid" id="Q96KJ4"/>
<dbReference type="OMA" id="CRAFTHR"/>
<dbReference type="OrthoDB" id="9909579at2759"/>
<dbReference type="PAN-GO" id="Q96KJ4">
    <property type="GO annotations" value="2 GO annotations based on evolutionary models"/>
</dbReference>
<dbReference type="PhylomeDB" id="Q96KJ4"/>
<dbReference type="TreeFam" id="TF331713"/>
<dbReference type="SignaLink" id="Q96KJ4"/>
<dbReference type="ChiTaRS" id="MSLNL">
    <property type="organism name" value="human"/>
</dbReference>
<dbReference type="Pharos" id="Q96KJ4">
    <property type="development level" value="Tdark"/>
</dbReference>
<dbReference type="PRO" id="PR:Q96KJ4"/>
<dbReference type="Proteomes" id="UP000005640">
    <property type="component" value="Chromosome 16"/>
</dbReference>
<dbReference type="RNAct" id="Q96KJ4">
    <property type="molecule type" value="protein"/>
</dbReference>
<dbReference type="Bgee" id="ENSG00000162006">
    <property type="expression patterns" value="Expressed in right uterine tube and 42 other cell types or tissues"/>
</dbReference>
<dbReference type="ExpressionAtlas" id="Q96KJ4">
    <property type="expression patterns" value="baseline and differential"/>
</dbReference>
<dbReference type="GO" id="GO:0009986">
    <property type="term" value="C:cell surface"/>
    <property type="evidence" value="ECO:0000318"/>
    <property type="project" value="GO_Central"/>
</dbReference>
<dbReference type="GO" id="GO:0016020">
    <property type="term" value="C:membrane"/>
    <property type="evidence" value="ECO:0007669"/>
    <property type="project" value="UniProtKB-SubCell"/>
</dbReference>
<dbReference type="GO" id="GO:0007160">
    <property type="term" value="P:cell-matrix adhesion"/>
    <property type="evidence" value="ECO:0000318"/>
    <property type="project" value="GO_Central"/>
</dbReference>
<dbReference type="InterPro" id="IPR010335">
    <property type="entry name" value="Mesothelin"/>
</dbReference>
<dbReference type="InterPro" id="IPR026664">
    <property type="entry name" value="Stereocilin-rel"/>
</dbReference>
<dbReference type="PANTHER" id="PTHR23412:SF15">
    <property type="entry name" value="MESOTHELIN-LIKE PROTEIN"/>
    <property type="match status" value="1"/>
</dbReference>
<dbReference type="PANTHER" id="PTHR23412">
    <property type="entry name" value="STEREOCILIN RELATED"/>
    <property type="match status" value="1"/>
</dbReference>
<dbReference type="Pfam" id="PF06060">
    <property type="entry name" value="Mesothelin"/>
    <property type="match status" value="1"/>
</dbReference>
<name>MSLNL_HUMAN</name>
<comment type="function">
    <text evidence="1">May play a role in cellular adhesion.</text>
</comment>
<comment type="subcellular location">
    <subcellularLocation>
        <location evidence="4">Membrane</location>
        <topology evidence="4">Single-pass type I membrane protein</topology>
    </subcellularLocation>
</comment>
<comment type="similarity">
    <text evidence="4">Belongs to the mesothelin family.</text>
</comment>
<comment type="sequence caution" evidence="4">
    <conflict type="erroneous gene model prediction">
        <sequence resource="EMBL-CDS" id="AAK61254"/>
    </conflict>
    <text>The sequence shown is based on gene prediction by similarity with the mouse ortholog.</text>
</comment>
<comment type="sequence caution" evidence="4">
    <conflict type="erroneous gene model prediction">
        <sequence resource="EMBL-CDS" id="EAW85717"/>
    </conflict>
    <text>The sequence shown is based on gene prediction by similarity with the mouse ortholog.</text>
</comment>